<dbReference type="EMBL" id="Z46902">
    <property type="protein sequence ID" value="CAA87000.1"/>
    <property type="molecule type" value="Genomic_DNA"/>
</dbReference>
<dbReference type="EMBL" id="BK006942">
    <property type="protein sequence ID" value="DAA08587.1"/>
    <property type="molecule type" value="Genomic_DNA"/>
</dbReference>
<dbReference type="PIR" id="S50346">
    <property type="entry name" value="S50346"/>
</dbReference>
<dbReference type="RefSeq" id="NP_012307.1">
    <property type="nucleotide sequence ID" value="NM_001179563.1"/>
</dbReference>
<dbReference type="BioGRID" id="35031">
    <property type="interactions" value="32"/>
</dbReference>
<dbReference type="FunCoup" id="P40585">
    <property type="interactions" value="48"/>
</dbReference>
<dbReference type="STRING" id="4932.YIR041W"/>
<dbReference type="PaxDb" id="4932-YIR041W"/>
<dbReference type="TopDownProteomics" id="P40585"/>
<dbReference type="EnsemblFungi" id="YIR041W_mRNA">
    <property type="protein sequence ID" value="YIR041W"/>
    <property type="gene ID" value="YIR041W"/>
</dbReference>
<dbReference type="GeneID" id="854859"/>
<dbReference type="KEGG" id="sce:YIR041W"/>
<dbReference type="AGR" id="SGD:S000001480"/>
<dbReference type="SGD" id="S000001480">
    <property type="gene designation" value="PAU15"/>
</dbReference>
<dbReference type="VEuPathDB" id="FungiDB:YIR041W"/>
<dbReference type="eggNOG" id="ENOG502SR1B">
    <property type="taxonomic scope" value="Eukaryota"/>
</dbReference>
<dbReference type="GeneTree" id="ENSGT00940000176276"/>
<dbReference type="HOGENOM" id="CLU_136376_0_0_1"/>
<dbReference type="InParanoid" id="P40585"/>
<dbReference type="OrthoDB" id="4053771at2759"/>
<dbReference type="BioCyc" id="YEAST:G3O-31452-MONOMER"/>
<dbReference type="PRO" id="PR:P40585"/>
<dbReference type="Proteomes" id="UP000002311">
    <property type="component" value="Chromosome IX"/>
</dbReference>
<dbReference type="RNAct" id="P40585">
    <property type="molecule type" value="protein"/>
</dbReference>
<dbReference type="GO" id="GO:0009277">
    <property type="term" value="C:fungal-type cell wall"/>
    <property type="evidence" value="ECO:0000318"/>
    <property type="project" value="GO_Central"/>
</dbReference>
<dbReference type="GO" id="GO:0000324">
    <property type="term" value="C:fungal-type vacuole"/>
    <property type="evidence" value="ECO:0007005"/>
    <property type="project" value="SGD"/>
</dbReference>
<dbReference type="GO" id="GO:0005199">
    <property type="term" value="F:structural constituent of cell wall"/>
    <property type="evidence" value="ECO:0000318"/>
    <property type="project" value="GO_Central"/>
</dbReference>
<dbReference type="GO" id="GO:0031505">
    <property type="term" value="P:fungal-type cell wall organization"/>
    <property type="evidence" value="ECO:0000318"/>
    <property type="project" value="GO_Central"/>
</dbReference>
<dbReference type="InterPro" id="IPR000992">
    <property type="entry name" value="SRP1_TIP1"/>
</dbReference>
<dbReference type="InterPro" id="IPR050788">
    <property type="entry name" value="Yeast_SRP1/TIP1_CWP"/>
</dbReference>
<dbReference type="PANTHER" id="PTHR31002:SF34">
    <property type="entry name" value="CELL WALL PROTEIN CWP1-RELATED"/>
    <property type="match status" value="1"/>
</dbReference>
<dbReference type="PANTHER" id="PTHR31002">
    <property type="entry name" value="SERIPAUPERIN"/>
    <property type="match status" value="1"/>
</dbReference>
<dbReference type="Pfam" id="PF00660">
    <property type="entry name" value="SRP1_TIP1"/>
    <property type="match status" value="1"/>
</dbReference>
<dbReference type="PROSITE" id="PS00724">
    <property type="entry name" value="SRP1_TIP1"/>
    <property type="match status" value="1"/>
</dbReference>
<comment type="similarity">
    <text evidence="2">Belongs to the SRP1/TIP1 family. Seripauperin subfamily.</text>
</comment>
<protein>
    <recommendedName>
        <fullName>Seripauperin-15</fullName>
    </recommendedName>
</protein>
<organism>
    <name type="scientific">Saccharomyces cerevisiae (strain ATCC 204508 / S288c)</name>
    <name type="common">Baker's yeast</name>
    <dbReference type="NCBI Taxonomy" id="559292"/>
    <lineage>
        <taxon>Eukaryota</taxon>
        <taxon>Fungi</taxon>
        <taxon>Dikarya</taxon>
        <taxon>Ascomycota</taxon>
        <taxon>Saccharomycotina</taxon>
        <taxon>Saccharomycetes</taxon>
        <taxon>Saccharomycetales</taxon>
        <taxon>Saccharomycetaceae</taxon>
        <taxon>Saccharomyces</taxon>
    </lineage>
</organism>
<name>PAU15_YEAST</name>
<gene>
    <name type="primary">PAU15</name>
    <name type="ordered locus">YIR041W</name>
</gene>
<reference key="1">
    <citation type="journal article" date="1997" name="Nature">
        <title>The nucleotide sequence of Saccharomyces cerevisiae chromosome IX.</title>
        <authorList>
            <person name="Churcher C.M."/>
            <person name="Bowman S."/>
            <person name="Badcock K."/>
            <person name="Bankier A.T."/>
            <person name="Brown D."/>
            <person name="Chillingworth T."/>
            <person name="Connor R."/>
            <person name="Devlin K."/>
            <person name="Gentles S."/>
            <person name="Hamlin N."/>
            <person name="Harris D.E."/>
            <person name="Horsnell T."/>
            <person name="Hunt S."/>
            <person name="Jagels K."/>
            <person name="Jones M."/>
            <person name="Lye G."/>
            <person name="Moule S."/>
            <person name="Odell C."/>
            <person name="Pearson D."/>
            <person name="Rajandream M.A."/>
            <person name="Rice P."/>
            <person name="Rowley N."/>
            <person name="Skelton J."/>
            <person name="Smith V."/>
            <person name="Walsh S.V."/>
            <person name="Whitehead S."/>
            <person name="Barrell B.G."/>
        </authorList>
    </citation>
    <scope>NUCLEOTIDE SEQUENCE [LARGE SCALE GENOMIC DNA]</scope>
    <source>
        <strain>ATCC 204508 / S288c</strain>
    </source>
</reference>
<reference key="2">
    <citation type="journal article" date="2014" name="G3 (Bethesda)">
        <title>The reference genome sequence of Saccharomyces cerevisiae: Then and now.</title>
        <authorList>
            <person name="Engel S.R."/>
            <person name="Dietrich F.S."/>
            <person name="Fisk D.G."/>
            <person name="Binkley G."/>
            <person name="Balakrishnan R."/>
            <person name="Costanzo M.C."/>
            <person name="Dwight S.S."/>
            <person name="Hitz B.C."/>
            <person name="Karra K."/>
            <person name="Nash R.S."/>
            <person name="Weng S."/>
            <person name="Wong E.D."/>
            <person name="Lloyd P."/>
            <person name="Skrzypek M.S."/>
            <person name="Miyasato S.R."/>
            <person name="Simison M."/>
            <person name="Cherry J.M."/>
        </authorList>
    </citation>
    <scope>GENOME REANNOTATION</scope>
    <source>
        <strain>ATCC 204508 / S288c</strain>
    </source>
</reference>
<feature type="signal peptide" evidence="1">
    <location>
        <begin position="1"/>
        <end position="20"/>
    </location>
</feature>
<feature type="chain" id="PRO_0000033246" description="Seripauperin-15">
    <location>
        <begin position="21"/>
        <end position="124"/>
    </location>
</feature>
<sequence length="124" mass="13159">MVKLTSIAAGVAAIAAGVAAAPATTTLSPSDERVNLVELGVYVSDIRAHLAQYYLFQAAHPSETYPVEIAEAVFNYGDFTTMLTGIPAEQVTRVITGVPWYSTRLRPAISSALSKDGIYTAIPK</sequence>
<keyword id="KW-1185">Reference proteome</keyword>
<keyword id="KW-0732">Signal</keyword>
<evidence type="ECO:0000255" key="1"/>
<evidence type="ECO:0000305" key="2"/>
<proteinExistence type="inferred from homology"/>
<accession>P40585</accession>
<accession>D6VVX1</accession>